<gene>
    <name type="ordered locus">BH2513</name>
</gene>
<dbReference type="EMBL" id="BA000004">
    <property type="protein sequence ID" value="BAB06232.1"/>
    <property type="molecule type" value="Genomic_DNA"/>
</dbReference>
<dbReference type="PIR" id="A83964">
    <property type="entry name" value="A83964"/>
</dbReference>
<dbReference type="RefSeq" id="WP_010898664.1">
    <property type="nucleotide sequence ID" value="NC_002570.2"/>
</dbReference>
<dbReference type="SMR" id="Q9K9Y1"/>
<dbReference type="STRING" id="272558.gene:10728411"/>
<dbReference type="GeneID" id="87598033"/>
<dbReference type="KEGG" id="bha:BH2513"/>
<dbReference type="eggNOG" id="COG2052">
    <property type="taxonomic scope" value="Bacteria"/>
</dbReference>
<dbReference type="HOGENOM" id="CLU_165326_0_0_9"/>
<dbReference type="OrthoDB" id="5432174at2"/>
<dbReference type="Proteomes" id="UP000001258">
    <property type="component" value="Chromosome"/>
</dbReference>
<dbReference type="HAMAP" id="MF_01503">
    <property type="entry name" value="RemA"/>
    <property type="match status" value="1"/>
</dbReference>
<dbReference type="InterPro" id="IPR007169">
    <property type="entry name" value="RemA-like"/>
</dbReference>
<dbReference type="NCBIfam" id="NF046064">
    <property type="entry name" value="MtxBflmRegRemA"/>
    <property type="match status" value="1"/>
</dbReference>
<dbReference type="NCBIfam" id="NF003315">
    <property type="entry name" value="PRK04323.1"/>
    <property type="match status" value="1"/>
</dbReference>
<dbReference type="PANTHER" id="PTHR38449:SF1">
    <property type="entry name" value="REGULATORY PROTEIN SSL2874-RELATED"/>
    <property type="match status" value="1"/>
</dbReference>
<dbReference type="PANTHER" id="PTHR38449">
    <property type="entry name" value="REGULATORY PROTEIN TM_1690-RELATED"/>
    <property type="match status" value="1"/>
</dbReference>
<dbReference type="Pfam" id="PF04025">
    <property type="entry name" value="RemA-like"/>
    <property type="match status" value="1"/>
</dbReference>
<evidence type="ECO:0000255" key="1">
    <source>
        <dbReference type="HAMAP-Rule" id="MF_01503"/>
    </source>
</evidence>
<reference key="1">
    <citation type="journal article" date="2000" name="Nucleic Acids Res.">
        <title>Complete genome sequence of the alkaliphilic bacterium Bacillus halodurans and genomic sequence comparison with Bacillus subtilis.</title>
        <authorList>
            <person name="Takami H."/>
            <person name="Nakasone K."/>
            <person name="Takaki Y."/>
            <person name="Maeno G."/>
            <person name="Sasaki R."/>
            <person name="Masui N."/>
            <person name="Fuji F."/>
            <person name="Hirama C."/>
            <person name="Nakamura Y."/>
            <person name="Ogasawara N."/>
            <person name="Kuhara S."/>
            <person name="Horikoshi K."/>
        </authorList>
    </citation>
    <scope>NUCLEOTIDE SEQUENCE [LARGE SCALE GENOMIC DNA]</scope>
    <source>
        <strain>ATCC BAA-125 / DSM 18197 / FERM 7344 / JCM 9153 / C-125</strain>
    </source>
</reference>
<name>Y2513_HALH5</name>
<organism>
    <name type="scientific">Halalkalibacterium halodurans (strain ATCC BAA-125 / DSM 18197 / FERM 7344 / JCM 9153 / C-125)</name>
    <name type="common">Bacillus halodurans</name>
    <dbReference type="NCBI Taxonomy" id="272558"/>
    <lineage>
        <taxon>Bacteria</taxon>
        <taxon>Bacillati</taxon>
        <taxon>Bacillota</taxon>
        <taxon>Bacilli</taxon>
        <taxon>Bacillales</taxon>
        <taxon>Bacillaceae</taxon>
        <taxon>Halalkalibacterium (ex Joshi et al. 2022)</taxon>
    </lineage>
</organism>
<accession>Q9K9Y1</accession>
<keyword id="KW-1185">Reference proteome</keyword>
<protein>
    <recommendedName>
        <fullName evidence="1">Putative regulatory protein BH2513</fullName>
    </recommendedName>
</protein>
<sequence length="87" mass="9571">MNIKLINIGFGNIVSANRIISIVSPESAPIKRIIQEARDRNMLIDATYGRRTRAVIIADSDHVILSAVQPETVAQRLTSKDDLEGEA</sequence>
<comment type="similarity">
    <text evidence="1">Belongs to the RemA family.</text>
</comment>
<feature type="chain" id="PRO_0000050221" description="Putative regulatory protein BH2513">
    <location>
        <begin position="1"/>
        <end position="87"/>
    </location>
</feature>
<proteinExistence type="inferred from homology"/>